<reference key="1">
    <citation type="submission" date="2002-08" db="EMBL/GenBank/DDBJ databases">
        <authorList>
            <person name="Burns F."/>
            <person name="Sonnenburg W.K."/>
            <person name="Rybalkin S.D."/>
            <person name="Beavo J.A."/>
        </authorList>
    </citation>
    <scope>NUCLEOTIDE SEQUENCE [MRNA]</scope>
</reference>
<reference key="2">
    <citation type="submission" date="2005-09" db="EMBL/GenBank/DDBJ databases">
        <authorList>
            <person name="Mural R.J."/>
            <person name="Adams M.D."/>
            <person name="Myers E.W."/>
            <person name="Smith H.O."/>
            <person name="Venter J.C."/>
        </authorList>
    </citation>
    <scope>NUCLEOTIDE SEQUENCE [LARGE SCALE GENOMIC DNA]</scope>
</reference>
<reference key="3">
    <citation type="journal article" date="2004" name="Genome Res.">
        <title>The status, quality, and expansion of the NIH full-length cDNA project: the Mammalian Gene Collection (MGC).</title>
        <authorList>
            <consortium name="The MGC Project Team"/>
        </authorList>
    </citation>
    <scope>NUCLEOTIDE SEQUENCE [LARGE SCALE MRNA]</scope>
    <source>
        <tissue>Brain</tissue>
    </source>
</reference>
<reference key="4">
    <citation type="journal article" date="2010" name="Cell">
        <title>A tissue-specific atlas of mouse protein phosphorylation and expression.</title>
        <authorList>
            <person name="Huttlin E.L."/>
            <person name="Jedrychowski M.P."/>
            <person name="Elias J.E."/>
            <person name="Goswami T."/>
            <person name="Rad R."/>
            <person name="Beausoleil S.A."/>
            <person name="Villen J."/>
            <person name="Haas W."/>
            <person name="Sowa M.E."/>
            <person name="Gygi S.P."/>
        </authorList>
    </citation>
    <scope>IDENTIFICATION BY MASS SPECTROMETRY [LARGE SCALE ANALYSIS]</scope>
    <source>
        <tissue>Lung</tissue>
        <tissue>Spleen</tissue>
    </source>
</reference>
<protein>
    <recommendedName>
        <fullName>cGMP-specific 3',5'-cyclic phosphodiesterase</fullName>
        <ecNumber evidence="2">3.1.4.35</ecNumber>
    </recommendedName>
    <alternativeName>
        <fullName>cGMP-binding cGMP-specific phosphodiesterase</fullName>
        <shortName>CGB-PDE</shortName>
    </alternativeName>
</protein>
<proteinExistence type="evidence at protein level"/>
<dbReference type="EC" id="3.1.4.35" evidence="2"/>
<dbReference type="EMBL" id="AF541937">
    <property type="protein sequence ID" value="AAN17330.1"/>
    <property type="molecule type" value="mRNA"/>
</dbReference>
<dbReference type="EMBL" id="CH466532">
    <property type="protein sequence ID" value="EDL12317.1"/>
    <property type="molecule type" value="Genomic_DNA"/>
</dbReference>
<dbReference type="EMBL" id="BC119137">
    <property type="protein sequence ID" value="AAI19138.1"/>
    <property type="molecule type" value="mRNA"/>
</dbReference>
<dbReference type="EMBL" id="BC120486">
    <property type="protein sequence ID" value="AAI20487.1"/>
    <property type="molecule type" value="mRNA"/>
</dbReference>
<dbReference type="CCDS" id="CCDS17812.1"/>
<dbReference type="RefSeq" id="NP_700471.2">
    <property type="nucleotide sequence ID" value="NM_153422.3"/>
</dbReference>
<dbReference type="PDB" id="2K31">
    <property type="method" value="NMR"/>
    <property type="chains" value="A=154-320"/>
</dbReference>
<dbReference type="PDBsum" id="2K31"/>
<dbReference type="SMR" id="Q8CG03"/>
<dbReference type="BioGRID" id="232382">
    <property type="interactions" value="5"/>
</dbReference>
<dbReference type="FunCoup" id="Q8CG03">
    <property type="interactions" value="976"/>
</dbReference>
<dbReference type="IntAct" id="Q8CG03">
    <property type="interactions" value="1"/>
</dbReference>
<dbReference type="STRING" id="10090.ENSMUSP00000069011"/>
<dbReference type="GlyGen" id="Q8CG03">
    <property type="glycosylation" value="1 site"/>
</dbReference>
<dbReference type="iPTMnet" id="Q8CG03"/>
<dbReference type="PhosphoSitePlus" id="Q8CG03"/>
<dbReference type="PaxDb" id="10090-ENSMUSP00000069011"/>
<dbReference type="PeptideAtlas" id="Q8CG03"/>
<dbReference type="ProteomicsDB" id="301780"/>
<dbReference type="Antibodypedia" id="1386">
    <property type="antibodies" value="194 antibodies from 35 providers"/>
</dbReference>
<dbReference type="DNASU" id="242202"/>
<dbReference type="Ensembl" id="ENSMUST00000066728.10">
    <property type="protein sequence ID" value="ENSMUSP00000069011.6"/>
    <property type="gene ID" value="ENSMUSG00000053965.11"/>
</dbReference>
<dbReference type="GeneID" id="242202"/>
<dbReference type="KEGG" id="mmu:242202"/>
<dbReference type="UCSC" id="uc008ret.2">
    <property type="organism name" value="mouse"/>
</dbReference>
<dbReference type="AGR" id="MGI:2651499"/>
<dbReference type="CTD" id="8654"/>
<dbReference type="MGI" id="MGI:2651499">
    <property type="gene designation" value="Pde5a"/>
</dbReference>
<dbReference type="VEuPathDB" id="HostDB:ENSMUSG00000053965"/>
<dbReference type="eggNOG" id="KOG3689">
    <property type="taxonomic scope" value="Eukaryota"/>
</dbReference>
<dbReference type="GeneTree" id="ENSGT00940000155475"/>
<dbReference type="InParanoid" id="Q8CG03"/>
<dbReference type="OrthoDB" id="74705at2759"/>
<dbReference type="PhylomeDB" id="Q8CG03"/>
<dbReference type="TreeFam" id="TF316499"/>
<dbReference type="BRENDA" id="3.1.4.35">
    <property type="organism ID" value="3474"/>
</dbReference>
<dbReference type="Reactome" id="R-MMU-418457">
    <property type="pathway name" value="cGMP effects"/>
</dbReference>
<dbReference type="Reactome" id="R-MMU-445355">
    <property type="pathway name" value="Smooth Muscle Contraction"/>
</dbReference>
<dbReference type="Reactome" id="R-MMU-9013422">
    <property type="pathway name" value="RHOBTB1 GTPase cycle"/>
</dbReference>
<dbReference type="UniPathway" id="UPA00763">
    <property type="reaction ID" value="UER00748"/>
</dbReference>
<dbReference type="BioGRID-ORCS" id="242202">
    <property type="hits" value="4 hits in 76 CRISPR screens"/>
</dbReference>
<dbReference type="ChiTaRS" id="Pde5a">
    <property type="organism name" value="mouse"/>
</dbReference>
<dbReference type="EvolutionaryTrace" id="Q8CG03"/>
<dbReference type="PRO" id="PR:Q8CG03"/>
<dbReference type="Proteomes" id="UP000000589">
    <property type="component" value="Chromosome 3"/>
</dbReference>
<dbReference type="RNAct" id="Q8CG03">
    <property type="molecule type" value="protein"/>
</dbReference>
<dbReference type="Bgee" id="ENSMUSG00000053965">
    <property type="expression patterns" value="Expressed in left lung lobe and 203 other cell types or tissues"/>
</dbReference>
<dbReference type="ExpressionAtlas" id="Q8CG03">
    <property type="expression patterns" value="baseline and differential"/>
</dbReference>
<dbReference type="GO" id="GO:0047555">
    <property type="term" value="F:3',5'-cyclic-GMP phosphodiesterase activity"/>
    <property type="evidence" value="ECO:0007669"/>
    <property type="project" value="UniProtKB-EC"/>
</dbReference>
<dbReference type="GO" id="GO:0004114">
    <property type="term" value="F:3',5'-cyclic-nucleotide phosphodiesterase activity"/>
    <property type="evidence" value="ECO:0000315"/>
    <property type="project" value="MGI"/>
</dbReference>
<dbReference type="GO" id="GO:0030553">
    <property type="term" value="F:cGMP binding"/>
    <property type="evidence" value="ECO:0000314"/>
    <property type="project" value="MGI"/>
</dbReference>
<dbReference type="GO" id="GO:0004112">
    <property type="term" value="F:cyclic-nucleotide phosphodiesterase activity"/>
    <property type="evidence" value="ECO:0000314"/>
    <property type="project" value="MGI"/>
</dbReference>
<dbReference type="GO" id="GO:0046872">
    <property type="term" value="F:metal ion binding"/>
    <property type="evidence" value="ECO:0007669"/>
    <property type="project" value="UniProtKB-KW"/>
</dbReference>
<dbReference type="GO" id="GO:0046069">
    <property type="term" value="P:cGMP catabolic process"/>
    <property type="evidence" value="ECO:0000314"/>
    <property type="project" value="MGI"/>
</dbReference>
<dbReference type="GO" id="GO:0046068">
    <property type="term" value="P:cGMP metabolic process"/>
    <property type="evidence" value="ECO:0000315"/>
    <property type="project" value="MGI"/>
</dbReference>
<dbReference type="GO" id="GO:0055118">
    <property type="term" value="P:negative regulation of cardiac muscle contraction"/>
    <property type="evidence" value="ECO:0000315"/>
    <property type="project" value="BHF-UCL"/>
</dbReference>
<dbReference type="GO" id="GO:0042130">
    <property type="term" value="P:negative regulation of T cell proliferation"/>
    <property type="evidence" value="ECO:0000315"/>
    <property type="project" value="MGI"/>
</dbReference>
<dbReference type="GO" id="GO:0048599">
    <property type="term" value="P:oocyte development"/>
    <property type="evidence" value="ECO:0000315"/>
    <property type="project" value="MGI"/>
</dbReference>
<dbReference type="GO" id="GO:0010613">
    <property type="term" value="P:positive regulation of cardiac muscle hypertrophy"/>
    <property type="evidence" value="ECO:0000315"/>
    <property type="project" value="BHF-UCL"/>
</dbReference>
<dbReference type="GO" id="GO:0045745">
    <property type="term" value="P:positive regulation of G protein-coupled receptor signaling pathway"/>
    <property type="evidence" value="ECO:0000315"/>
    <property type="project" value="BHF-UCL"/>
</dbReference>
<dbReference type="GO" id="GO:0060282">
    <property type="term" value="P:positive regulation of oocyte development"/>
    <property type="evidence" value="ECO:0000315"/>
    <property type="project" value="MGI"/>
</dbReference>
<dbReference type="GO" id="GO:0010749">
    <property type="term" value="P:regulation of nitric oxide mediated signal transduction"/>
    <property type="evidence" value="ECO:0000316"/>
    <property type="project" value="MGI"/>
</dbReference>
<dbReference type="GO" id="GO:0055119">
    <property type="term" value="P:relaxation of cardiac muscle"/>
    <property type="evidence" value="ECO:0000315"/>
    <property type="project" value="BHF-UCL"/>
</dbReference>
<dbReference type="GO" id="GO:0007165">
    <property type="term" value="P:signal transduction"/>
    <property type="evidence" value="ECO:0007669"/>
    <property type="project" value="InterPro"/>
</dbReference>
<dbReference type="GO" id="GO:0042098">
    <property type="term" value="P:T cell proliferation"/>
    <property type="evidence" value="ECO:0000315"/>
    <property type="project" value="MGI"/>
</dbReference>
<dbReference type="CDD" id="cd00077">
    <property type="entry name" value="HDc"/>
    <property type="match status" value="1"/>
</dbReference>
<dbReference type="FunFam" id="1.10.1300.10:FF:000003">
    <property type="entry name" value="Phosphodiesterase"/>
    <property type="match status" value="1"/>
</dbReference>
<dbReference type="FunFam" id="3.30.450.40:FF:000004">
    <property type="entry name" value="Phosphodiesterase"/>
    <property type="match status" value="1"/>
</dbReference>
<dbReference type="FunFam" id="3.30.450.40:FF:000015">
    <property type="entry name" value="Phosphodiesterase"/>
    <property type="match status" value="1"/>
</dbReference>
<dbReference type="Gene3D" id="3.30.450.40">
    <property type="match status" value="2"/>
</dbReference>
<dbReference type="Gene3D" id="1.10.1300.10">
    <property type="entry name" value="3'5'-cyclic nucleotide phosphodiesterase, catalytic domain"/>
    <property type="match status" value="1"/>
</dbReference>
<dbReference type="InterPro" id="IPR003018">
    <property type="entry name" value="GAF"/>
</dbReference>
<dbReference type="InterPro" id="IPR029016">
    <property type="entry name" value="GAF-like_dom_sf"/>
</dbReference>
<dbReference type="InterPro" id="IPR003607">
    <property type="entry name" value="HD/PDEase_dom"/>
</dbReference>
<dbReference type="InterPro" id="IPR023088">
    <property type="entry name" value="PDEase"/>
</dbReference>
<dbReference type="InterPro" id="IPR002073">
    <property type="entry name" value="PDEase_catalytic_dom"/>
</dbReference>
<dbReference type="InterPro" id="IPR036971">
    <property type="entry name" value="PDEase_catalytic_dom_sf"/>
</dbReference>
<dbReference type="InterPro" id="IPR023174">
    <property type="entry name" value="PDEase_CS"/>
</dbReference>
<dbReference type="PANTHER" id="PTHR11347">
    <property type="entry name" value="CYCLIC NUCLEOTIDE PHOSPHODIESTERASE"/>
    <property type="match status" value="1"/>
</dbReference>
<dbReference type="Pfam" id="PF01590">
    <property type="entry name" value="GAF"/>
    <property type="match status" value="2"/>
</dbReference>
<dbReference type="Pfam" id="PF00233">
    <property type="entry name" value="PDEase_I"/>
    <property type="match status" value="1"/>
</dbReference>
<dbReference type="PRINTS" id="PR00387">
    <property type="entry name" value="PDIESTERASE1"/>
</dbReference>
<dbReference type="SMART" id="SM00065">
    <property type="entry name" value="GAF"/>
    <property type="match status" value="2"/>
</dbReference>
<dbReference type="SMART" id="SM00471">
    <property type="entry name" value="HDc"/>
    <property type="match status" value="1"/>
</dbReference>
<dbReference type="SUPFAM" id="SSF55781">
    <property type="entry name" value="GAF domain-like"/>
    <property type="match status" value="2"/>
</dbReference>
<dbReference type="SUPFAM" id="SSF109604">
    <property type="entry name" value="HD-domain/PDEase-like"/>
    <property type="match status" value="1"/>
</dbReference>
<dbReference type="PROSITE" id="PS00126">
    <property type="entry name" value="PDEASE_I_1"/>
    <property type="match status" value="1"/>
</dbReference>
<dbReference type="PROSITE" id="PS51845">
    <property type="entry name" value="PDEASE_I_2"/>
    <property type="match status" value="1"/>
</dbReference>
<sequence>MERAGPNSVRSQQQRDPDWVEAWLDDHRDFTFSYFIRKATRDMVNAWFSERVHNIPVCKEGIRAHTESCSCSLQQSPHADNTTPGAPARKISASEFDRPLRPIVVKDSEGTVSFLSDSGKKEQMPLTPPRFDSDEGDQCSRLLELVKDISSHLDVTALCHKIFLHIHGLISADRYSLFLVCEDSSKDKFLISRLFDVAEGSTLEEASNNCIRLEWNKGIVGHVAAFGEPLNIKDAYEDPRFNAEVDQITGYKTQSILCMPIKNHREEVVGVAQAINKKSGNGGTFTEKDEKDFAAYLAFCGIVLHNAQLYETSLLENKRNQVLLDLASLIFEEQQSLEVILKKIAATIISFMQVQKCTIFIVDEDCPDSFSRVFHMECEEVGKPSDPLTREQDANKINYMYAQYVKNTMEPLNIPDVTKDKRFPWTNENMGHVNTPCIGSLLCTPIKNGKKNKVIGVCQLVNKMEENTGKIKAFNQNDEQFLEAFVIFCGLGIQNTQMYEAVERAMAKQMVTLEVLSYHASAAEEETRELQALSAAVVPSAQTLKITDFSFSDFELSDLETALCTIRMFTDLNLVQNFQMKHEVLCRWILSVKKNYRKNVAYHNWRHAFNTAQCMFAALKAGKIQNKLTDLETLALLIAALSHDLDHRGVNNSYIQRSEHPLAQLYCHSIMEHHHFDQCLMILNSPGNQILSGLSIDEYKTTLKIIKQAILATDLALYIKRRGEFFELIRKNQFSFEDPLQKELFLAMLMTACDLSAITKPWPIQQRIAELVAAEFFDQGDRERKELNMEPADLMNREKKNKIPSMQVGFIDAICLQLYEALTHVSEDCLPLLDGCRKNRQKWQALAEQQEKMLLNGESSQGKRD</sequence>
<gene>
    <name type="primary">Pde5a</name>
    <name type="synonym">Pde5</name>
</gene>
<feature type="chain" id="PRO_0000198824" description="cGMP-specific 3',5'-cyclic phosphodiesterase">
    <location>
        <begin position="1"/>
        <end position="865"/>
    </location>
</feature>
<feature type="domain" description="GAF 1">
    <location>
        <begin position="154"/>
        <end position="304"/>
    </location>
</feature>
<feature type="domain" description="GAF 2">
    <location>
        <begin position="336"/>
        <end position="493"/>
    </location>
</feature>
<feature type="domain" description="PDEase" evidence="5">
    <location>
        <begin position="526"/>
        <end position="850"/>
    </location>
</feature>
<feature type="active site" description="Proton donor" evidence="3">
    <location>
        <position position="603"/>
    </location>
</feature>
<feature type="binding site" evidence="2">
    <location>
        <position position="607"/>
    </location>
    <ligand>
        <name>Zn(2+)</name>
        <dbReference type="ChEBI" id="CHEBI:29105"/>
    </ligand>
</feature>
<feature type="binding site" evidence="2">
    <location>
        <position position="643"/>
    </location>
    <ligand>
        <name>Zn(2+)</name>
        <dbReference type="ChEBI" id="CHEBI:29105"/>
    </ligand>
</feature>
<feature type="binding site" evidence="2">
    <location>
        <position position="644"/>
    </location>
    <ligand>
        <name>Mg(2+)</name>
        <dbReference type="ChEBI" id="CHEBI:18420"/>
    </ligand>
</feature>
<feature type="binding site" evidence="2">
    <location>
        <position position="644"/>
    </location>
    <ligand>
        <name>Zn(2+)</name>
        <dbReference type="ChEBI" id="CHEBI:29105"/>
    </ligand>
</feature>
<feature type="binding site" evidence="2">
    <location>
        <position position="754"/>
    </location>
    <ligand>
        <name>Zn(2+)</name>
        <dbReference type="ChEBI" id="CHEBI:29105"/>
    </ligand>
</feature>
<feature type="binding site" evidence="2">
    <location>
        <position position="807"/>
    </location>
    <ligand>
        <name>3',5'-cyclic GMP</name>
        <dbReference type="ChEBI" id="CHEBI:57746"/>
    </ligand>
</feature>
<feature type="modified residue" description="Phosphoserine" evidence="4">
    <location>
        <position position="92"/>
    </location>
</feature>
<feature type="sequence conflict" description="In Ref. 1; AAN17330." evidence="6" ref="1">
    <original>S</original>
    <variation>T</variation>
    <location>
        <position position="176"/>
    </location>
</feature>
<feature type="helix" evidence="7">
    <location>
        <begin position="158"/>
        <end position="166"/>
    </location>
</feature>
<feature type="turn" evidence="7">
    <location>
        <begin position="167"/>
        <end position="171"/>
    </location>
</feature>
<feature type="strand" evidence="7">
    <location>
        <begin position="173"/>
        <end position="183"/>
    </location>
</feature>
<feature type="turn" evidence="7">
    <location>
        <begin position="184"/>
        <end position="186"/>
    </location>
</feature>
<feature type="strand" evidence="7">
    <location>
        <begin position="187"/>
        <end position="197"/>
    </location>
</feature>
<feature type="turn" evidence="7">
    <location>
        <begin position="204"/>
        <end position="206"/>
    </location>
</feature>
<feature type="strand" evidence="7">
    <location>
        <begin position="207"/>
        <end position="209"/>
    </location>
</feature>
<feature type="strand" evidence="7">
    <location>
        <begin position="212"/>
        <end position="214"/>
    </location>
</feature>
<feature type="turn" evidence="7">
    <location>
        <begin position="215"/>
        <end position="217"/>
    </location>
</feature>
<feature type="helix" evidence="7">
    <location>
        <begin position="219"/>
        <end position="226"/>
    </location>
</feature>
<feature type="strand" evidence="7">
    <location>
        <begin position="230"/>
        <end position="233"/>
    </location>
</feature>
<feature type="strand" evidence="7">
    <location>
        <begin position="238"/>
        <end position="240"/>
    </location>
</feature>
<feature type="helix" evidence="7">
    <location>
        <begin position="245"/>
        <end position="249"/>
    </location>
</feature>
<feature type="strand" evidence="7">
    <location>
        <begin position="256"/>
        <end position="263"/>
    </location>
</feature>
<feature type="turn" evidence="7">
    <location>
        <begin position="264"/>
        <end position="266"/>
    </location>
</feature>
<feature type="strand" evidence="7">
    <location>
        <begin position="267"/>
        <end position="275"/>
    </location>
</feature>
<feature type="helix" evidence="7">
    <location>
        <begin position="287"/>
        <end position="300"/>
    </location>
</feature>
<organism>
    <name type="scientific">Mus musculus</name>
    <name type="common">Mouse</name>
    <dbReference type="NCBI Taxonomy" id="10090"/>
    <lineage>
        <taxon>Eukaryota</taxon>
        <taxon>Metazoa</taxon>
        <taxon>Chordata</taxon>
        <taxon>Craniata</taxon>
        <taxon>Vertebrata</taxon>
        <taxon>Euteleostomi</taxon>
        <taxon>Mammalia</taxon>
        <taxon>Eutheria</taxon>
        <taxon>Euarchontoglires</taxon>
        <taxon>Glires</taxon>
        <taxon>Rodentia</taxon>
        <taxon>Myomorpha</taxon>
        <taxon>Muroidea</taxon>
        <taxon>Muridae</taxon>
        <taxon>Murinae</taxon>
        <taxon>Mus</taxon>
        <taxon>Mus</taxon>
    </lineage>
</organism>
<comment type="function">
    <text evidence="2">Plays a role in signal transduction by regulating the intracellular concentration of cyclic nucleotides. This phosphodiesterase catalyzes the specific hydrolysis of cGMP to 5'-GMP. Specifically regulates nitric-oxide-generated cGMP.</text>
</comment>
<comment type="catalytic activity">
    <reaction evidence="2">
        <text>3',5'-cyclic GMP + H2O = GMP + H(+)</text>
        <dbReference type="Rhea" id="RHEA:16957"/>
        <dbReference type="ChEBI" id="CHEBI:15377"/>
        <dbReference type="ChEBI" id="CHEBI:15378"/>
        <dbReference type="ChEBI" id="CHEBI:57746"/>
        <dbReference type="ChEBI" id="CHEBI:58115"/>
        <dbReference type="EC" id="3.1.4.35"/>
    </reaction>
    <physiologicalReaction direction="left-to-right" evidence="2">
        <dbReference type="Rhea" id="RHEA:16958"/>
    </physiologicalReaction>
</comment>
<comment type="cofactor">
    <cofactor evidence="2">
        <name>Zn(2+)</name>
        <dbReference type="ChEBI" id="CHEBI:29105"/>
    </cofactor>
    <text evidence="2">Binds 1 Zn(2+) ion per subunit. Binds 2 divalent metal cations per subunit: site 1 preferentially binds zinc, while site 2 has a preference for magnesium. Tightly binds zinc.</text>
</comment>
<comment type="cofactor">
    <cofactor evidence="2">
        <name>Mg(2+)</name>
        <dbReference type="ChEBI" id="CHEBI:18420"/>
    </cofactor>
    <text evidence="2">Binds 1 Mg(2+) ions per subunit. Binds 2 divalent metal cations per subunit: site 1 preferentially binds zinc, while site 2 has a preference for magnesium. Binds magnesium less tightly than zinc.</text>
</comment>
<comment type="pathway">
    <text>Purine metabolism; 3',5'-cyclic GMP degradation; GMP from 3',5'-cyclic GMP: step 1/1.</text>
</comment>
<comment type="domain">
    <text>Composed of a C-terminal catalytic domain containing two putative divalent metal sites and an N-terminal regulatory domain which contains two homologous allosteric cGMP-binding regions, A and B.</text>
</comment>
<comment type="PTM">
    <text evidence="1">Phosphorylation is regulated by binding of cGMP to the two allosteric sites. Phosphorylation by PRKG1 leads to its activation.</text>
</comment>
<comment type="similarity">
    <text evidence="6">Belongs to the cyclic nucleotide phosphodiesterase family.</text>
</comment>
<keyword id="KW-0002">3D-structure</keyword>
<keyword id="KW-0021">Allosteric enzyme</keyword>
<keyword id="KW-0140">cGMP</keyword>
<keyword id="KW-0142">cGMP-binding</keyword>
<keyword id="KW-0378">Hydrolase</keyword>
<keyword id="KW-0460">Magnesium</keyword>
<keyword id="KW-0479">Metal-binding</keyword>
<keyword id="KW-0547">Nucleotide-binding</keyword>
<keyword id="KW-0597">Phosphoprotein</keyword>
<keyword id="KW-1185">Reference proteome</keyword>
<keyword id="KW-0677">Repeat</keyword>
<keyword id="KW-0862">Zinc</keyword>
<accession>Q8CG03</accession>
<accession>Q0VBW0</accession>
<name>PDE5A_MOUSE</name>
<evidence type="ECO:0000250" key="1"/>
<evidence type="ECO:0000250" key="2">
    <source>
        <dbReference type="UniProtKB" id="O76074"/>
    </source>
</evidence>
<evidence type="ECO:0000250" key="3">
    <source>
        <dbReference type="UniProtKB" id="O76083"/>
    </source>
</evidence>
<evidence type="ECO:0000255" key="4"/>
<evidence type="ECO:0000255" key="5">
    <source>
        <dbReference type="PROSITE-ProRule" id="PRU01192"/>
    </source>
</evidence>
<evidence type="ECO:0000305" key="6"/>
<evidence type="ECO:0007829" key="7">
    <source>
        <dbReference type="PDB" id="2K31"/>
    </source>
</evidence>